<protein>
    <recommendedName>
        <fullName evidence="1">Nucleoid-associated protein ECA1177</fullName>
    </recommendedName>
</protein>
<reference key="1">
    <citation type="journal article" date="2004" name="Proc. Natl. Acad. Sci. U.S.A.">
        <title>Genome sequence of the enterobacterial phytopathogen Erwinia carotovora subsp. atroseptica and characterization of virulence factors.</title>
        <authorList>
            <person name="Bell K.S."/>
            <person name="Sebaihia M."/>
            <person name="Pritchard L."/>
            <person name="Holden M.T.G."/>
            <person name="Hyman L.J."/>
            <person name="Holeva M.C."/>
            <person name="Thomson N.R."/>
            <person name="Bentley S.D."/>
            <person name="Churcher L.J.C."/>
            <person name="Mungall K."/>
            <person name="Atkin R."/>
            <person name="Bason N."/>
            <person name="Brooks K."/>
            <person name="Chillingworth T."/>
            <person name="Clark K."/>
            <person name="Doggett J."/>
            <person name="Fraser A."/>
            <person name="Hance Z."/>
            <person name="Hauser H."/>
            <person name="Jagels K."/>
            <person name="Moule S."/>
            <person name="Norbertczak H."/>
            <person name="Ormond D."/>
            <person name="Price C."/>
            <person name="Quail M.A."/>
            <person name="Sanders M."/>
            <person name="Walker D."/>
            <person name="Whitehead S."/>
            <person name="Salmond G.P.C."/>
            <person name="Birch P.R.J."/>
            <person name="Parkhill J."/>
            <person name="Toth I.K."/>
        </authorList>
    </citation>
    <scope>NUCLEOTIDE SEQUENCE [LARGE SCALE GENOMIC DNA]</scope>
    <source>
        <strain>SCRI 1043 / ATCC BAA-672</strain>
    </source>
</reference>
<accession>Q6D7Z8</accession>
<sequence length="109" mass="11989">MFGKGGIGNLMKQAQQMQEKMQQMQEEVANLEVTGESGAGLVKITINGAHNCRRVEIDPSLMEDDKEMLEDLIAAAFNDAARRIAETQKEKMATVSSGMQLPPGFKMPF</sequence>
<evidence type="ECO:0000255" key="1">
    <source>
        <dbReference type="HAMAP-Rule" id="MF_00274"/>
    </source>
</evidence>
<proteinExistence type="inferred from homology"/>
<dbReference type="EMBL" id="BX950851">
    <property type="protein sequence ID" value="CAG74087.1"/>
    <property type="molecule type" value="Genomic_DNA"/>
</dbReference>
<dbReference type="RefSeq" id="WP_011092768.1">
    <property type="nucleotide sequence ID" value="NC_004547.2"/>
</dbReference>
<dbReference type="SMR" id="Q6D7Z8"/>
<dbReference type="STRING" id="218491.ECA1177"/>
<dbReference type="KEGG" id="eca:ECA1177"/>
<dbReference type="PATRIC" id="fig|218491.5.peg.1192"/>
<dbReference type="eggNOG" id="COG0718">
    <property type="taxonomic scope" value="Bacteria"/>
</dbReference>
<dbReference type="HOGENOM" id="CLU_140930_0_0_6"/>
<dbReference type="OrthoDB" id="9808738at2"/>
<dbReference type="Proteomes" id="UP000007966">
    <property type="component" value="Chromosome"/>
</dbReference>
<dbReference type="GO" id="GO:0043590">
    <property type="term" value="C:bacterial nucleoid"/>
    <property type="evidence" value="ECO:0007669"/>
    <property type="project" value="UniProtKB-UniRule"/>
</dbReference>
<dbReference type="GO" id="GO:0005829">
    <property type="term" value="C:cytosol"/>
    <property type="evidence" value="ECO:0007669"/>
    <property type="project" value="TreeGrafter"/>
</dbReference>
<dbReference type="GO" id="GO:0003677">
    <property type="term" value="F:DNA binding"/>
    <property type="evidence" value="ECO:0007669"/>
    <property type="project" value="UniProtKB-UniRule"/>
</dbReference>
<dbReference type="FunFam" id="3.30.1310.10:FF:000001">
    <property type="entry name" value="Nucleoid-associated protein YbaB"/>
    <property type="match status" value="1"/>
</dbReference>
<dbReference type="Gene3D" id="3.30.1310.10">
    <property type="entry name" value="Nucleoid-associated protein YbaB-like domain"/>
    <property type="match status" value="1"/>
</dbReference>
<dbReference type="HAMAP" id="MF_00274">
    <property type="entry name" value="DNA_YbaB_EbfC"/>
    <property type="match status" value="1"/>
</dbReference>
<dbReference type="InterPro" id="IPR036894">
    <property type="entry name" value="YbaB-like_sf"/>
</dbReference>
<dbReference type="InterPro" id="IPR004401">
    <property type="entry name" value="YbaB/EbfC"/>
</dbReference>
<dbReference type="NCBIfam" id="TIGR00103">
    <property type="entry name" value="DNA_YbaB_EbfC"/>
    <property type="match status" value="1"/>
</dbReference>
<dbReference type="PANTHER" id="PTHR33449">
    <property type="entry name" value="NUCLEOID-ASSOCIATED PROTEIN YBAB"/>
    <property type="match status" value="1"/>
</dbReference>
<dbReference type="PANTHER" id="PTHR33449:SF1">
    <property type="entry name" value="NUCLEOID-ASSOCIATED PROTEIN YBAB"/>
    <property type="match status" value="1"/>
</dbReference>
<dbReference type="Pfam" id="PF02575">
    <property type="entry name" value="YbaB_DNA_bd"/>
    <property type="match status" value="1"/>
</dbReference>
<dbReference type="PIRSF" id="PIRSF004555">
    <property type="entry name" value="UCP004555"/>
    <property type="match status" value="1"/>
</dbReference>
<dbReference type="SUPFAM" id="SSF82607">
    <property type="entry name" value="YbaB-like"/>
    <property type="match status" value="1"/>
</dbReference>
<keyword id="KW-0963">Cytoplasm</keyword>
<keyword id="KW-0238">DNA-binding</keyword>
<keyword id="KW-1185">Reference proteome</keyword>
<name>Y1177_PECAS</name>
<gene>
    <name type="ordered locus">ECA1177</name>
</gene>
<feature type="chain" id="PRO_1000003741" description="Nucleoid-associated protein ECA1177">
    <location>
        <begin position="1"/>
        <end position="109"/>
    </location>
</feature>
<comment type="function">
    <text evidence="1">Binds to DNA and alters its conformation. May be involved in regulation of gene expression, nucleoid organization and DNA protection.</text>
</comment>
<comment type="subunit">
    <text evidence="1">Homodimer.</text>
</comment>
<comment type="subcellular location">
    <subcellularLocation>
        <location evidence="1">Cytoplasm</location>
        <location evidence="1">Nucleoid</location>
    </subcellularLocation>
</comment>
<comment type="similarity">
    <text evidence="1">Belongs to the YbaB/EbfC family.</text>
</comment>
<organism>
    <name type="scientific">Pectobacterium atrosepticum (strain SCRI 1043 / ATCC BAA-672)</name>
    <name type="common">Erwinia carotovora subsp. atroseptica</name>
    <dbReference type="NCBI Taxonomy" id="218491"/>
    <lineage>
        <taxon>Bacteria</taxon>
        <taxon>Pseudomonadati</taxon>
        <taxon>Pseudomonadota</taxon>
        <taxon>Gammaproteobacteria</taxon>
        <taxon>Enterobacterales</taxon>
        <taxon>Pectobacteriaceae</taxon>
        <taxon>Pectobacterium</taxon>
    </lineage>
</organism>